<dbReference type="EC" id="3.6.5.3" evidence="2"/>
<dbReference type="EMBL" id="CP000848">
    <property type="protein sequence ID" value="ABV76596.1"/>
    <property type="molecule type" value="Genomic_DNA"/>
</dbReference>
<dbReference type="RefSeq" id="WP_004997779.1">
    <property type="nucleotide sequence ID" value="NC_009882.1"/>
</dbReference>
<dbReference type="SMR" id="A8GT71"/>
<dbReference type="GeneID" id="34513832"/>
<dbReference type="GeneID" id="95361488"/>
<dbReference type="KEGG" id="rri:A1G_05565"/>
<dbReference type="HOGENOM" id="CLU_007265_0_0_5"/>
<dbReference type="Proteomes" id="UP000006832">
    <property type="component" value="Chromosome"/>
</dbReference>
<dbReference type="GO" id="GO:0005737">
    <property type="term" value="C:cytoplasm"/>
    <property type="evidence" value="ECO:0007669"/>
    <property type="project" value="UniProtKB-SubCell"/>
</dbReference>
<dbReference type="GO" id="GO:0005525">
    <property type="term" value="F:GTP binding"/>
    <property type="evidence" value="ECO:0007669"/>
    <property type="project" value="UniProtKB-UniRule"/>
</dbReference>
<dbReference type="GO" id="GO:0003924">
    <property type="term" value="F:GTPase activity"/>
    <property type="evidence" value="ECO:0007669"/>
    <property type="project" value="InterPro"/>
</dbReference>
<dbReference type="GO" id="GO:0097216">
    <property type="term" value="F:guanosine tetraphosphate binding"/>
    <property type="evidence" value="ECO:0007669"/>
    <property type="project" value="UniProtKB-ARBA"/>
</dbReference>
<dbReference type="GO" id="GO:0003746">
    <property type="term" value="F:translation elongation factor activity"/>
    <property type="evidence" value="ECO:0007669"/>
    <property type="project" value="UniProtKB-UniRule"/>
</dbReference>
<dbReference type="CDD" id="cd01884">
    <property type="entry name" value="EF_Tu"/>
    <property type="match status" value="1"/>
</dbReference>
<dbReference type="CDD" id="cd03697">
    <property type="entry name" value="EFTU_II"/>
    <property type="match status" value="1"/>
</dbReference>
<dbReference type="CDD" id="cd03707">
    <property type="entry name" value="EFTU_III"/>
    <property type="match status" value="1"/>
</dbReference>
<dbReference type="FunFam" id="2.40.30.10:FF:000001">
    <property type="entry name" value="Elongation factor Tu"/>
    <property type="match status" value="1"/>
</dbReference>
<dbReference type="FunFam" id="3.40.50.300:FF:000003">
    <property type="entry name" value="Elongation factor Tu"/>
    <property type="match status" value="1"/>
</dbReference>
<dbReference type="Gene3D" id="3.40.50.300">
    <property type="entry name" value="P-loop containing nucleotide triphosphate hydrolases"/>
    <property type="match status" value="1"/>
</dbReference>
<dbReference type="Gene3D" id="2.40.30.10">
    <property type="entry name" value="Translation factors"/>
    <property type="match status" value="2"/>
</dbReference>
<dbReference type="HAMAP" id="MF_00118_B">
    <property type="entry name" value="EF_Tu_B"/>
    <property type="match status" value="1"/>
</dbReference>
<dbReference type="InterPro" id="IPR041709">
    <property type="entry name" value="EF-Tu_GTP-bd"/>
</dbReference>
<dbReference type="InterPro" id="IPR050055">
    <property type="entry name" value="EF-Tu_GTPase"/>
</dbReference>
<dbReference type="InterPro" id="IPR004161">
    <property type="entry name" value="EFTu-like_2"/>
</dbReference>
<dbReference type="InterPro" id="IPR033720">
    <property type="entry name" value="EFTU_2"/>
</dbReference>
<dbReference type="InterPro" id="IPR031157">
    <property type="entry name" value="G_TR_CS"/>
</dbReference>
<dbReference type="InterPro" id="IPR027417">
    <property type="entry name" value="P-loop_NTPase"/>
</dbReference>
<dbReference type="InterPro" id="IPR005225">
    <property type="entry name" value="Small_GTP-bd"/>
</dbReference>
<dbReference type="InterPro" id="IPR000795">
    <property type="entry name" value="T_Tr_GTP-bd_dom"/>
</dbReference>
<dbReference type="InterPro" id="IPR009000">
    <property type="entry name" value="Transl_B-barrel_sf"/>
</dbReference>
<dbReference type="InterPro" id="IPR009001">
    <property type="entry name" value="Transl_elong_EF1A/Init_IF2_C"/>
</dbReference>
<dbReference type="InterPro" id="IPR004541">
    <property type="entry name" value="Transl_elong_EFTu/EF1A_bac/org"/>
</dbReference>
<dbReference type="InterPro" id="IPR004160">
    <property type="entry name" value="Transl_elong_EFTu/EF1A_C"/>
</dbReference>
<dbReference type="NCBIfam" id="TIGR00485">
    <property type="entry name" value="EF-Tu"/>
    <property type="match status" value="1"/>
</dbReference>
<dbReference type="NCBIfam" id="NF000766">
    <property type="entry name" value="PRK00049.1"/>
    <property type="match status" value="1"/>
</dbReference>
<dbReference type="NCBIfam" id="NF009372">
    <property type="entry name" value="PRK12735.1"/>
    <property type="match status" value="1"/>
</dbReference>
<dbReference type="NCBIfam" id="NF009373">
    <property type="entry name" value="PRK12736.1"/>
    <property type="match status" value="1"/>
</dbReference>
<dbReference type="NCBIfam" id="TIGR00231">
    <property type="entry name" value="small_GTP"/>
    <property type="match status" value="1"/>
</dbReference>
<dbReference type="PANTHER" id="PTHR43721:SF22">
    <property type="entry name" value="ELONGATION FACTOR TU, MITOCHONDRIAL"/>
    <property type="match status" value="1"/>
</dbReference>
<dbReference type="PANTHER" id="PTHR43721">
    <property type="entry name" value="ELONGATION FACTOR TU-RELATED"/>
    <property type="match status" value="1"/>
</dbReference>
<dbReference type="Pfam" id="PF00009">
    <property type="entry name" value="GTP_EFTU"/>
    <property type="match status" value="1"/>
</dbReference>
<dbReference type="Pfam" id="PF03144">
    <property type="entry name" value="GTP_EFTU_D2"/>
    <property type="match status" value="1"/>
</dbReference>
<dbReference type="Pfam" id="PF03143">
    <property type="entry name" value="GTP_EFTU_D3"/>
    <property type="match status" value="1"/>
</dbReference>
<dbReference type="PRINTS" id="PR00315">
    <property type="entry name" value="ELONGATNFCT"/>
</dbReference>
<dbReference type="SUPFAM" id="SSF50465">
    <property type="entry name" value="EF-Tu/eEF-1alpha/eIF2-gamma C-terminal domain"/>
    <property type="match status" value="1"/>
</dbReference>
<dbReference type="SUPFAM" id="SSF52540">
    <property type="entry name" value="P-loop containing nucleoside triphosphate hydrolases"/>
    <property type="match status" value="1"/>
</dbReference>
<dbReference type="SUPFAM" id="SSF50447">
    <property type="entry name" value="Translation proteins"/>
    <property type="match status" value="1"/>
</dbReference>
<dbReference type="PROSITE" id="PS00301">
    <property type="entry name" value="G_TR_1"/>
    <property type="match status" value="1"/>
</dbReference>
<dbReference type="PROSITE" id="PS51722">
    <property type="entry name" value="G_TR_2"/>
    <property type="match status" value="1"/>
</dbReference>
<evidence type="ECO:0000250" key="1"/>
<evidence type="ECO:0000255" key="2">
    <source>
        <dbReference type="HAMAP-Rule" id="MF_00118"/>
    </source>
</evidence>
<feature type="chain" id="PRO_1000015743" description="Elongation factor Tu">
    <location>
        <begin position="1"/>
        <end position="394"/>
    </location>
</feature>
<feature type="domain" description="tr-type G">
    <location>
        <begin position="10"/>
        <end position="204"/>
    </location>
</feature>
<feature type="region of interest" description="G1" evidence="1">
    <location>
        <begin position="19"/>
        <end position="26"/>
    </location>
</feature>
<feature type="region of interest" description="G2" evidence="1">
    <location>
        <begin position="60"/>
        <end position="64"/>
    </location>
</feature>
<feature type="region of interest" description="G3" evidence="1">
    <location>
        <begin position="81"/>
        <end position="84"/>
    </location>
</feature>
<feature type="region of interest" description="G4" evidence="1">
    <location>
        <begin position="136"/>
        <end position="139"/>
    </location>
</feature>
<feature type="region of interest" description="G5" evidence="1">
    <location>
        <begin position="174"/>
        <end position="176"/>
    </location>
</feature>
<feature type="binding site" evidence="2">
    <location>
        <begin position="19"/>
        <end position="26"/>
    </location>
    <ligand>
        <name>GTP</name>
        <dbReference type="ChEBI" id="CHEBI:37565"/>
    </ligand>
</feature>
<feature type="binding site" evidence="2">
    <location>
        <position position="26"/>
    </location>
    <ligand>
        <name>Mg(2+)</name>
        <dbReference type="ChEBI" id="CHEBI:18420"/>
    </ligand>
</feature>
<feature type="binding site" evidence="2">
    <location>
        <begin position="81"/>
        <end position="85"/>
    </location>
    <ligand>
        <name>GTP</name>
        <dbReference type="ChEBI" id="CHEBI:37565"/>
    </ligand>
</feature>
<feature type="binding site" evidence="2">
    <location>
        <begin position="136"/>
        <end position="139"/>
    </location>
    <ligand>
        <name>GTP</name>
        <dbReference type="ChEBI" id="CHEBI:37565"/>
    </ligand>
</feature>
<proteinExistence type="inferred from homology"/>
<reference key="1">
    <citation type="submission" date="2007-09" db="EMBL/GenBank/DDBJ databases">
        <title>Complete genome sequence of Rickettsia rickettsii.</title>
        <authorList>
            <person name="Madan A."/>
            <person name="Fahey J."/>
            <person name="Helton E."/>
            <person name="Ketteman M."/>
            <person name="Madan A."/>
            <person name="Rodrigues S."/>
            <person name="Sanchez A."/>
            <person name="Dasch G."/>
            <person name="Eremeeva M."/>
        </authorList>
    </citation>
    <scope>NUCLEOTIDE SEQUENCE [LARGE SCALE GENOMIC DNA]</scope>
    <source>
        <strain>Sheila Smith</strain>
    </source>
</reference>
<accession>A8GT71</accession>
<comment type="function">
    <text evidence="2">GTP hydrolase that promotes the GTP-dependent binding of aminoacyl-tRNA to the A-site of ribosomes during protein biosynthesis.</text>
</comment>
<comment type="catalytic activity">
    <reaction evidence="2">
        <text>GTP + H2O = GDP + phosphate + H(+)</text>
        <dbReference type="Rhea" id="RHEA:19669"/>
        <dbReference type="ChEBI" id="CHEBI:15377"/>
        <dbReference type="ChEBI" id="CHEBI:15378"/>
        <dbReference type="ChEBI" id="CHEBI:37565"/>
        <dbReference type="ChEBI" id="CHEBI:43474"/>
        <dbReference type="ChEBI" id="CHEBI:58189"/>
        <dbReference type="EC" id="3.6.5.3"/>
    </reaction>
    <physiologicalReaction direction="left-to-right" evidence="2">
        <dbReference type="Rhea" id="RHEA:19670"/>
    </physiologicalReaction>
</comment>
<comment type="subunit">
    <text evidence="2">Monomer.</text>
</comment>
<comment type="subcellular location">
    <subcellularLocation>
        <location evidence="2">Cytoplasm</location>
    </subcellularLocation>
</comment>
<comment type="similarity">
    <text evidence="2">Belongs to the TRAFAC class translation factor GTPase superfamily. Classic translation factor GTPase family. EF-Tu/EF-1A subfamily.</text>
</comment>
<keyword id="KW-0963">Cytoplasm</keyword>
<keyword id="KW-0251">Elongation factor</keyword>
<keyword id="KW-0342">GTP-binding</keyword>
<keyword id="KW-0378">Hydrolase</keyword>
<keyword id="KW-0460">Magnesium</keyword>
<keyword id="KW-0479">Metal-binding</keyword>
<keyword id="KW-0547">Nucleotide-binding</keyword>
<keyword id="KW-0648">Protein biosynthesis</keyword>
<organism>
    <name type="scientific">Rickettsia rickettsii (strain Sheila Smith)</name>
    <dbReference type="NCBI Taxonomy" id="392021"/>
    <lineage>
        <taxon>Bacteria</taxon>
        <taxon>Pseudomonadati</taxon>
        <taxon>Pseudomonadota</taxon>
        <taxon>Alphaproteobacteria</taxon>
        <taxon>Rickettsiales</taxon>
        <taxon>Rickettsiaceae</taxon>
        <taxon>Rickettsieae</taxon>
        <taxon>Rickettsia</taxon>
        <taxon>spotted fever group</taxon>
    </lineage>
</organism>
<gene>
    <name evidence="2" type="primary">tuf</name>
    <name type="ordered locus">A1G_05565</name>
</gene>
<sequence length="394" mass="42878">MAKAKFERTKPHVNIGTIGHVDHGKTSLTAAITIVLAKTGGAQATAYDQIDAAPEEKERGITISTAHVEYETKNRHYAHVDCPGHADYVKNMITGAAQMDGAILVVSAADGPMPQTREHILLAKQVGVPAMVVFLNKIDMVDDPDLLELVEMEVRELLSKYGFPGDEIPIIKGSALQALEGKPEGEKAINELMDAVDSYIPQPVRATDKPFLMPIEDVFSISGRGTVVTGRVESGIIKVGEEIEIVGLKDTQKTTCTGVEMFRKLLDEGQAGDNVGILLRGTKREEVERGQVLAKPGSIKPHDKFEAEVYVLSKEEGGRHTPFTNDYRPQFYFRTTDVTGTIKLPADKQMVMPGDNATFTVELIKPIAMQEGLKFSIREGGRTVGAGVVTKINN</sequence>
<name>EFTU_RICRS</name>
<protein>
    <recommendedName>
        <fullName evidence="2">Elongation factor Tu</fullName>
        <shortName evidence="2">EF-Tu</shortName>
        <ecNumber evidence="2">3.6.5.3</ecNumber>
    </recommendedName>
</protein>